<feature type="chain" id="PRO_0000282865" description="AT-rich interactive domain-containing protein 4B">
    <location>
        <begin position="1"/>
        <end position="1228"/>
    </location>
</feature>
<feature type="domain" description="ARID" evidence="4">
    <location>
        <begin position="306"/>
        <end position="398"/>
    </location>
</feature>
<feature type="region of interest" description="Disordered" evidence="5">
    <location>
        <begin position="123"/>
        <end position="167"/>
    </location>
</feature>
<feature type="region of interest" description="Disordered" evidence="5">
    <location>
        <begin position="266"/>
        <end position="307"/>
    </location>
</feature>
<feature type="region of interest" description="Disordered" evidence="5">
    <location>
        <begin position="437"/>
        <end position="466"/>
    </location>
</feature>
<feature type="region of interest" description="Disordered" evidence="5">
    <location>
        <begin position="479"/>
        <end position="525"/>
    </location>
</feature>
<feature type="region of interest" description="Disordered" evidence="5">
    <location>
        <begin position="539"/>
        <end position="606"/>
    </location>
</feature>
<feature type="region of interest" description="Disordered" evidence="5">
    <location>
        <begin position="620"/>
        <end position="802"/>
    </location>
</feature>
<feature type="region of interest" description="Disordered" evidence="5">
    <location>
        <begin position="825"/>
        <end position="1129"/>
    </location>
</feature>
<feature type="region of interest" description="Disordered" evidence="5">
    <location>
        <begin position="1168"/>
        <end position="1204"/>
    </location>
</feature>
<feature type="coiled-coil region" evidence="3">
    <location>
        <begin position="1141"/>
        <end position="1186"/>
    </location>
</feature>
<feature type="compositionally biased region" description="Acidic residues" evidence="5">
    <location>
        <begin position="277"/>
        <end position="305"/>
    </location>
</feature>
<feature type="compositionally biased region" description="Basic and acidic residues" evidence="5">
    <location>
        <begin position="437"/>
        <end position="464"/>
    </location>
</feature>
<feature type="compositionally biased region" description="Basic and acidic residues" evidence="5">
    <location>
        <begin position="483"/>
        <end position="511"/>
    </location>
</feature>
<feature type="compositionally biased region" description="Basic residues" evidence="5">
    <location>
        <begin position="546"/>
        <end position="555"/>
    </location>
</feature>
<feature type="compositionally biased region" description="Basic and acidic residues" evidence="5">
    <location>
        <begin position="556"/>
        <end position="569"/>
    </location>
</feature>
<feature type="compositionally biased region" description="Basic and acidic residues" evidence="5">
    <location>
        <begin position="596"/>
        <end position="606"/>
    </location>
</feature>
<feature type="compositionally biased region" description="Basic and acidic residues" evidence="5">
    <location>
        <begin position="635"/>
        <end position="667"/>
    </location>
</feature>
<feature type="compositionally biased region" description="Basic and acidic residues" evidence="5">
    <location>
        <begin position="691"/>
        <end position="700"/>
    </location>
</feature>
<feature type="compositionally biased region" description="Acidic residues" evidence="5">
    <location>
        <begin position="701"/>
        <end position="713"/>
    </location>
</feature>
<feature type="compositionally biased region" description="Basic and acidic residues" evidence="5">
    <location>
        <begin position="721"/>
        <end position="730"/>
    </location>
</feature>
<feature type="compositionally biased region" description="Polar residues" evidence="5">
    <location>
        <begin position="744"/>
        <end position="753"/>
    </location>
</feature>
<feature type="compositionally biased region" description="Basic and acidic residues" evidence="5">
    <location>
        <begin position="755"/>
        <end position="765"/>
    </location>
</feature>
<feature type="compositionally biased region" description="Basic and acidic residues" evidence="5">
    <location>
        <begin position="825"/>
        <end position="843"/>
    </location>
</feature>
<feature type="compositionally biased region" description="Basic and acidic residues" evidence="5">
    <location>
        <begin position="911"/>
        <end position="926"/>
    </location>
</feature>
<feature type="compositionally biased region" description="Polar residues" evidence="5">
    <location>
        <begin position="927"/>
        <end position="937"/>
    </location>
</feature>
<feature type="compositionally biased region" description="Low complexity" evidence="5">
    <location>
        <begin position="944"/>
        <end position="965"/>
    </location>
</feature>
<feature type="compositionally biased region" description="Basic and acidic residues" evidence="5">
    <location>
        <begin position="972"/>
        <end position="981"/>
    </location>
</feature>
<feature type="compositionally biased region" description="Low complexity" evidence="5">
    <location>
        <begin position="1003"/>
        <end position="1017"/>
    </location>
</feature>
<feature type="compositionally biased region" description="Basic residues" evidence="5">
    <location>
        <begin position="1046"/>
        <end position="1064"/>
    </location>
</feature>
<feature type="compositionally biased region" description="Basic and acidic residues" evidence="5">
    <location>
        <begin position="1112"/>
        <end position="1124"/>
    </location>
</feature>
<feature type="compositionally biased region" description="Low complexity" evidence="5">
    <location>
        <begin position="1188"/>
        <end position="1204"/>
    </location>
</feature>
<feature type="modified residue" description="Phosphoserine" evidence="2">
    <location>
        <position position="276"/>
    </location>
</feature>
<feature type="modified residue" description="Phosphoserine" evidence="6">
    <location>
        <position position="295"/>
    </location>
</feature>
<feature type="modified residue" description="Phosphoserine" evidence="6">
    <location>
        <position position="296"/>
    </location>
</feature>
<feature type="modified residue" description="Phosphoserine" evidence="2">
    <location>
        <position position="482"/>
    </location>
</feature>
<feature type="modified residue" description="Phosphoserine" evidence="2">
    <location>
        <position position="579"/>
    </location>
</feature>
<feature type="modified residue" description="Phosphoserine" evidence="6">
    <location>
        <position position="581"/>
    </location>
</feature>
<feature type="modified residue" description="Phosphoserine" evidence="6">
    <location>
        <position position="588"/>
    </location>
</feature>
<feature type="modified residue" description="Phosphoserine" evidence="2">
    <location>
        <position position="630"/>
    </location>
</feature>
<feature type="modified residue" description="Phosphoserine" evidence="2">
    <location>
        <position position="691"/>
    </location>
</feature>
<feature type="modified residue" description="Phosphoserine" evidence="6">
    <location>
        <position position="703"/>
    </location>
</feature>
<feature type="modified residue" description="Phosphothreonine" evidence="6">
    <location>
        <position position="706"/>
    </location>
</feature>
<feature type="modified residue" description="Phosphoserine" evidence="2">
    <location>
        <position position="930"/>
    </location>
</feature>
<feature type="modified residue" description="Phosphothreonine" evidence="2">
    <location>
        <position position="942"/>
    </location>
</feature>
<feature type="modified residue" description="Phosphoserine" evidence="2">
    <location>
        <position position="945"/>
    </location>
</feature>
<feature type="modified residue" description="Phosphothreonine" evidence="2">
    <location>
        <position position="1066"/>
    </location>
</feature>
<feature type="modified residue" description="Phosphoserine" evidence="2">
    <location>
        <position position="1068"/>
    </location>
</feature>
<feature type="modified residue" description="Phosphoserine" evidence="2">
    <location>
        <position position="1069"/>
    </location>
</feature>
<feature type="modified residue" description="Phosphoserine" evidence="2">
    <location>
        <position position="1071"/>
    </location>
</feature>
<feature type="modified residue" description="Phosphoserine" evidence="2">
    <location>
        <position position="1075"/>
    </location>
</feature>
<feature type="cross-link" description="Glycyl lysine isopeptide (Lys-Gly) (interchain with G-Cter in SUMO2)" evidence="2">
    <location>
        <position position="428"/>
    </location>
</feature>
<feature type="cross-link" description="Glycyl lysine isopeptide (Lys-Gly) (interchain with G-Cter in SUMO2)" evidence="2">
    <location>
        <position position="461"/>
    </location>
</feature>
<feature type="cross-link" description="Glycyl lysine isopeptide (Lys-Gly) (interchain with G-Cter in SUMO2)" evidence="2">
    <location>
        <position position="664"/>
    </location>
</feature>
<reference key="1">
    <citation type="submission" date="2000-03" db="EMBL/GenBank/DDBJ databases">
        <title>Upregulation of rat homolog of human retinoblastoma-binding protein (RBBP1) in substantia nigra following developmental striatal target injury.</title>
        <authorList>
            <person name="Kholodilov N.G."/>
            <person name="Neystat M."/>
            <person name="Burke R.E."/>
        </authorList>
    </citation>
    <scope>NUCLEOTIDE SEQUENCE [MRNA]</scope>
</reference>
<reference key="2">
    <citation type="journal article" date="2012" name="Nat. Commun.">
        <title>Quantitative maps of protein phosphorylation sites across 14 different rat organs and tissues.</title>
        <authorList>
            <person name="Lundby A."/>
            <person name="Secher A."/>
            <person name="Lage K."/>
            <person name="Nordsborg N.B."/>
            <person name="Dmytriyev A."/>
            <person name="Lundby C."/>
            <person name="Olsen J.V."/>
        </authorList>
    </citation>
    <scope>PHOSPHORYLATION [LARGE SCALE ANALYSIS] AT SER-295; SER-296; SER-581; SER-588; SER-703 AND THR-706</scope>
    <scope>IDENTIFICATION BY MASS SPECTROMETRY [LARGE SCALE ANALYSIS]</scope>
</reference>
<accession>Q9JKB5</accession>
<evidence type="ECO:0000250" key="1">
    <source>
        <dbReference type="UniProtKB" id="A2CG63"/>
    </source>
</evidence>
<evidence type="ECO:0000250" key="2">
    <source>
        <dbReference type="UniProtKB" id="Q4LE39"/>
    </source>
</evidence>
<evidence type="ECO:0000255" key="3"/>
<evidence type="ECO:0000255" key="4">
    <source>
        <dbReference type="PROSITE-ProRule" id="PRU00355"/>
    </source>
</evidence>
<evidence type="ECO:0000256" key="5">
    <source>
        <dbReference type="SAM" id="MobiDB-lite"/>
    </source>
</evidence>
<evidence type="ECO:0007744" key="6">
    <source>
    </source>
</evidence>
<dbReference type="EMBL" id="AF245512">
    <property type="protein sequence ID" value="AAF61271.1"/>
    <property type="molecule type" value="mRNA"/>
</dbReference>
<dbReference type="RefSeq" id="NP_445873.1">
    <property type="nucleotide sequence ID" value="NM_053421.1"/>
</dbReference>
<dbReference type="SMR" id="Q9JKB5"/>
<dbReference type="FunCoup" id="Q9JKB5">
    <property type="interactions" value="3852"/>
</dbReference>
<dbReference type="STRING" id="10116.ENSRNOP00000010836"/>
<dbReference type="iPTMnet" id="Q9JKB5"/>
<dbReference type="PhosphoSitePlus" id="Q9JKB5"/>
<dbReference type="PaxDb" id="10116-ENSRNOP00000010836"/>
<dbReference type="GeneID" id="84481"/>
<dbReference type="KEGG" id="rno:84481"/>
<dbReference type="UCSC" id="RGD:619919">
    <property type="organism name" value="rat"/>
</dbReference>
<dbReference type="AGR" id="RGD:619919"/>
<dbReference type="CTD" id="51742"/>
<dbReference type="RGD" id="619919">
    <property type="gene designation" value="Arid4b"/>
</dbReference>
<dbReference type="eggNOG" id="KOG2744">
    <property type="taxonomic scope" value="Eukaryota"/>
</dbReference>
<dbReference type="eggNOG" id="KOG3001">
    <property type="taxonomic scope" value="Eukaryota"/>
</dbReference>
<dbReference type="InParanoid" id="Q9JKB5"/>
<dbReference type="PhylomeDB" id="Q9JKB5"/>
<dbReference type="Reactome" id="R-RNO-3214815">
    <property type="pathway name" value="HDACs deacetylate histones"/>
</dbReference>
<dbReference type="PRO" id="PR:Q9JKB5"/>
<dbReference type="Proteomes" id="UP000002494">
    <property type="component" value="Unplaced"/>
</dbReference>
<dbReference type="GO" id="GO:0005634">
    <property type="term" value="C:nucleus"/>
    <property type="evidence" value="ECO:0000318"/>
    <property type="project" value="GO_Central"/>
</dbReference>
<dbReference type="GO" id="GO:0003677">
    <property type="term" value="F:DNA binding"/>
    <property type="evidence" value="ECO:0000266"/>
    <property type="project" value="RGD"/>
</dbReference>
<dbReference type="GO" id="GO:0000976">
    <property type="term" value="F:transcription cis-regulatory region binding"/>
    <property type="evidence" value="ECO:0000318"/>
    <property type="project" value="GO_Central"/>
</dbReference>
<dbReference type="GO" id="GO:0006325">
    <property type="term" value="P:chromatin organization"/>
    <property type="evidence" value="ECO:0000266"/>
    <property type="project" value="RGD"/>
</dbReference>
<dbReference type="GO" id="GO:0097368">
    <property type="term" value="P:establishment of Sertoli cell barrier"/>
    <property type="evidence" value="ECO:0000266"/>
    <property type="project" value="RGD"/>
</dbReference>
<dbReference type="GO" id="GO:0071514">
    <property type="term" value="P:genomic imprinting"/>
    <property type="evidence" value="ECO:0000266"/>
    <property type="project" value="RGD"/>
</dbReference>
<dbReference type="GO" id="GO:0045944">
    <property type="term" value="P:positive regulation of transcription by RNA polymerase II"/>
    <property type="evidence" value="ECO:0000266"/>
    <property type="project" value="RGD"/>
</dbReference>
<dbReference type="GO" id="GO:0006357">
    <property type="term" value="P:regulation of transcription by RNA polymerase II"/>
    <property type="evidence" value="ECO:0000318"/>
    <property type="project" value="GO_Central"/>
</dbReference>
<dbReference type="GO" id="GO:0007283">
    <property type="term" value="P:spermatogenesis"/>
    <property type="evidence" value="ECO:0000266"/>
    <property type="project" value="RGD"/>
</dbReference>
<dbReference type="GO" id="GO:0006366">
    <property type="term" value="P:transcription by RNA polymerase II"/>
    <property type="evidence" value="ECO:0000266"/>
    <property type="project" value="RGD"/>
</dbReference>
<dbReference type="CDD" id="cd16883">
    <property type="entry name" value="ARID_ARID4B"/>
    <property type="match status" value="1"/>
</dbReference>
<dbReference type="CDD" id="cd20460">
    <property type="entry name" value="Tudor_ARID4B_rpt1"/>
    <property type="match status" value="1"/>
</dbReference>
<dbReference type="CDD" id="cd20462">
    <property type="entry name" value="Tudor_ARID4B_rpt2"/>
    <property type="match status" value="1"/>
</dbReference>
<dbReference type="FunFam" id="1.10.150.60:FF:000003">
    <property type="entry name" value="AT-rich interactive domain-containing protein 4B"/>
    <property type="match status" value="1"/>
</dbReference>
<dbReference type="FunFam" id="2.30.30.140:FF:000009">
    <property type="entry name" value="AT-rich interactive domain-containing protein 4B"/>
    <property type="match status" value="1"/>
</dbReference>
<dbReference type="FunFam" id="2.30.30.140:FF:000044">
    <property type="entry name" value="AT-rich interactive domain-containing protein 4B isoform X1"/>
    <property type="match status" value="1"/>
</dbReference>
<dbReference type="Gene3D" id="2.30.30.140">
    <property type="match status" value="2"/>
</dbReference>
<dbReference type="Gene3D" id="1.10.150.60">
    <property type="entry name" value="ARID DNA-binding domain"/>
    <property type="match status" value="1"/>
</dbReference>
<dbReference type="InterPro" id="IPR051232">
    <property type="entry name" value="ARID/SWI1_ChromRemod"/>
</dbReference>
<dbReference type="InterPro" id="IPR012603">
    <property type="entry name" value="ARID4A/B_PWWP"/>
</dbReference>
<dbReference type="InterPro" id="IPR028853">
    <property type="entry name" value="ARID4B_ARID/BRIGHT"/>
</dbReference>
<dbReference type="InterPro" id="IPR001606">
    <property type="entry name" value="ARID_dom"/>
</dbReference>
<dbReference type="InterPro" id="IPR036431">
    <property type="entry name" value="ARID_dom_sf"/>
</dbReference>
<dbReference type="InterPro" id="IPR002999">
    <property type="entry name" value="Tudor"/>
</dbReference>
<dbReference type="InterPro" id="IPR047476">
    <property type="entry name" value="Tudor_ARID4B_rpt1"/>
</dbReference>
<dbReference type="InterPro" id="IPR047474">
    <property type="entry name" value="Tudor_ARID4B_rpt2"/>
</dbReference>
<dbReference type="PANTHER" id="PTHR13964:SF24">
    <property type="entry name" value="AT-RICH INTERACTIVE DOMAIN-CONTAINING PROTEIN 4B"/>
    <property type="match status" value="1"/>
</dbReference>
<dbReference type="PANTHER" id="PTHR13964">
    <property type="entry name" value="RBP-RELATED"/>
    <property type="match status" value="1"/>
</dbReference>
<dbReference type="Pfam" id="PF01388">
    <property type="entry name" value="ARID"/>
    <property type="match status" value="1"/>
</dbReference>
<dbReference type="Pfam" id="PF08169">
    <property type="entry name" value="RBB1NT"/>
    <property type="match status" value="1"/>
</dbReference>
<dbReference type="SMART" id="SM01014">
    <property type="entry name" value="ARID"/>
    <property type="match status" value="1"/>
</dbReference>
<dbReference type="SMART" id="SM00501">
    <property type="entry name" value="BRIGHT"/>
    <property type="match status" value="1"/>
</dbReference>
<dbReference type="SMART" id="SM00333">
    <property type="entry name" value="TUDOR"/>
    <property type="match status" value="1"/>
</dbReference>
<dbReference type="SUPFAM" id="SSF46774">
    <property type="entry name" value="ARID-like"/>
    <property type="match status" value="1"/>
</dbReference>
<dbReference type="SUPFAM" id="SSF63748">
    <property type="entry name" value="Tudor/PWWP/MBT"/>
    <property type="match status" value="1"/>
</dbReference>
<dbReference type="PROSITE" id="PS51011">
    <property type="entry name" value="ARID"/>
    <property type="match status" value="1"/>
</dbReference>
<protein>
    <recommendedName>
        <fullName>AT-rich interactive domain-containing protein 4B</fullName>
        <shortName>ARID domain-containing protein 4B</shortName>
    </recommendedName>
    <alternativeName>
        <fullName>180 kDa Sin3-associated polypeptide</fullName>
        <shortName>Sin3-associated polypeptide p180</shortName>
    </alternativeName>
    <alternativeName>
        <fullName>Histone deacetylase complex subunit SAP180</fullName>
    </alternativeName>
    <alternativeName>
        <fullName>Retinoblastoma-binding protein 1-like 1</fullName>
    </alternativeName>
</protein>
<name>ARI4B_RAT</name>
<organism>
    <name type="scientific">Rattus norvegicus</name>
    <name type="common">Rat</name>
    <dbReference type="NCBI Taxonomy" id="10116"/>
    <lineage>
        <taxon>Eukaryota</taxon>
        <taxon>Metazoa</taxon>
        <taxon>Chordata</taxon>
        <taxon>Craniata</taxon>
        <taxon>Vertebrata</taxon>
        <taxon>Euteleostomi</taxon>
        <taxon>Mammalia</taxon>
        <taxon>Eutheria</taxon>
        <taxon>Euarchontoglires</taxon>
        <taxon>Glires</taxon>
        <taxon>Rodentia</taxon>
        <taxon>Myomorpha</taxon>
        <taxon>Muroidea</taxon>
        <taxon>Muridae</taxon>
        <taxon>Murinae</taxon>
        <taxon>Rattus</taxon>
    </lineage>
</organism>
<proteinExistence type="evidence at protein level"/>
<gene>
    <name type="primary">Arid4b</name>
    <name type="synonym">Rbbp1l1</name>
    <name type="synonym">Sap180</name>
</gene>
<keyword id="KW-0156">Chromatin regulator</keyword>
<keyword id="KW-0175">Coiled coil</keyword>
<keyword id="KW-0238">DNA-binding</keyword>
<keyword id="KW-1017">Isopeptide bond</keyword>
<keyword id="KW-0539">Nucleus</keyword>
<keyword id="KW-0597">Phosphoprotein</keyword>
<keyword id="KW-1185">Reference proteome</keyword>
<keyword id="KW-0804">Transcription</keyword>
<keyword id="KW-0805">Transcription regulation</keyword>
<keyword id="KW-0832">Ubl conjugation</keyword>
<sequence length="1228" mass="137080">MKALDEPPYLTVGTDVSAKYRGAFCEAKIKTAKRLVKVKVTFRHDSSTVEVQDDHIKGPLKVGAIVEVKNLDGAYQEAVINKLTDASWYTVVFDDGDEKTLRRSSLCLKGERHFAESETLDQLPLTNPEHFGTPVIGKKTNRGRRSNHIPEEESSSSSSDDDEDDRKQTDELLGKVVCVDYISLDKKKALWFPALVVCPDCSDEIAVKKDNILVRSFKDGKFTSVPRKDVHEITSDTAPKPDAVLKQAFDQALEFHKSRTIPANWKTELKEDSSSSEAEEEEEEEDDEKEKEDNSSEEEEEIEPFPEERENFLQQLYKFMEDRGTPINKRPVLGYRNLNLFKLFRLVHKLGGFDNIESGAVWKQVYQDLGIPVLNSAAGYNVKCAYKKYLYGFEEYCRSANIDFQMALPEKVLNKPCKDCENKEIKVKEESDAEIKEVNVEDSKNMIPKEETPAEDESERKENIKPSLGSKKGLLECIPAQSDQEKEANITKLEEKESLEDKDGATARAEEALSTEVDAEEEQARSGYDEWIKADKIVRPADKNVPKIKHRKKIKNKLDKEKDRDEKYSPKNCKLRRLSKSPFQSNPSPEMVSKLDLADAKNSDTGHIKSIEITSILNGLQASESSAEDSEQEEERCAQDPESSSKDESKVEHSAHSRSELISKEELSSPSLLEENKVHPDLVIAKTVSKSPERLRKDVEAISEDTDFEEEDEITKKRKDVKKDTTDKALKPQTKTWGKDRYCIQTNCLQSGSPGKKEDRTKSKEPLCTGNSSNSSSDEDEEEKSKAKMTPTKKYNGLEEKRKSLRTTSFYSGFSEVAEKRIKLLNNSDERLQNNRAKDRKDVWSSIQGQWPKKTLKELFSDSDTEAAASPPHAAPDEGTVEESLQTVAEEESCSPNMELEKPLPTSVDSKPVEEKPLEVSDRKTEFPSSGSNSVLNTPPTTPESPSSVTVTETSQQQSSVTVSVPLPPNQEEVRSIKSETDSTIEVDSVVGELQDLQSEGNSSPAGFNASVSSSSSNQPEPEHPEKACTGQKRVKDTQGVGSSSKKQKRSHKATVVNNKKKGKGTNSSDSEDLSAGESVTKTQAIKSVPTGMKTHNSKSPARIQSPGKCGKNGDKDPDLKEPSNRLPKVYKWSFQMSDLENMTSAERISILQEKLQEIRKHYLSLKSEVASIDRRRKRLKKKERESAATSSSSSSPSSSSITAAVMLTLAEPSMSSASQNGMSVECR</sequence>
<comment type="function">
    <text evidence="1 2">Acts as a transcriptional repressor. May function in the assembly and/or enzymatic activity of the Sin3A corepressor complex or in mediating interactions between the complex and other regulatory complexes. Plays a role in the regulation of epigenetic modifications at the PWS/AS imprinting center near the SNRPN promoter, where it might function as part of a complex with RB1 and ARID4A. Involved in spermatogenesis, together with ARID4A, where it functions as a transcriptional coactivator for AR (androgen receptor) and enhances expression of genes required for sperm maturation. Regulates expression of the tight junction protein CLDN3 in the testis, which is important for integrity of the blood-testis barrier. Plays a role in myeloid homeostasis where it regulates the histone methylation state of bone marrow cells and expression of various genes involved in hematopoiesis. May function as a leukemia suppressor.</text>
</comment>
<comment type="subunit">
    <text evidence="1 2">Component of a Sin3A corepressor complex consisting of SIN3A, SAP130, SUDS3/SAP45, SAP180, HDAC1 and HDAC2. Interacts with ARID4A (By similarity). Interacts with AR (By similarity).</text>
</comment>
<comment type="subcellular location">
    <subcellularLocation>
        <location evidence="4">Nucleus</location>
    </subcellularLocation>
</comment>
<comment type="domain">
    <text evidence="2">The C-terminus mediates interaction with mSin3A corepressor complex.</text>
</comment>
<comment type="domain">
    <text evidence="2">The N-terminus is involved in transcriptional repression by HDAC-independent mechanisms.</text>
</comment>
<comment type="domain">
    <text evidence="2">The ARID domain is involved in stabilizing the mSin3A corepressor complex on DNA.</text>
</comment>